<organism>
    <name type="scientific">Klebsiella pneumoniae subsp. pneumoniae (strain ATCC 700721 / MGH 78578)</name>
    <dbReference type="NCBI Taxonomy" id="272620"/>
    <lineage>
        <taxon>Bacteria</taxon>
        <taxon>Pseudomonadati</taxon>
        <taxon>Pseudomonadota</taxon>
        <taxon>Gammaproteobacteria</taxon>
        <taxon>Enterobacterales</taxon>
        <taxon>Enterobacteriaceae</taxon>
        <taxon>Klebsiella/Raoultella group</taxon>
        <taxon>Klebsiella</taxon>
        <taxon>Klebsiella pneumoniae complex</taxon>
    </lineage>
</organism>
<reference key="1">
    <citation type="submission" date="2006-09" db="EMBL/GenBank/DDBJ databases">
        <authorList>
            <consortium name="The Klebsiella pneumonia Genome Sequencing Project"/>
            <person name="McClelland M."/>
            <person name="Sanderson E.K."/>
            <person name="Spieth J."/>
            <person name="Clifton W.S."/>
            <person name="Latreille P."/>
            <person name="Sabo A."/>
            <person name="Pepin K."/>
            <person name="Bhonagiri V."/>
            <person name="Porwollik S."/>
            <person name="Ali J."/>
            <person name="Wilson R.K."/>
        </authorList>
    </citation>
    <scope>NUCLEOTIDE SEQUENCE [LARGE SCALE GENOMIC DNA]</scope>
    <source>
        <strain>ATCC 700721 / MGH 78578</strain>
    </source>
</reference>
<dbReference type="EC" id="2.7.11.33" evidence="1"/>
<dbReference type="EC" id="2.7.4.28" evidence="1"/>
<dbReference type="EMBL" id="CP000647">
    <property type="protein sequence ID" value="ABR77589.1"/>
    <property type="status" value="ALT_INIT"/>
    <property type="molecule type" value="Genomic_DNA"/>
</dbReference>
<dbReference type="RefSeq" id="WP_041937721.1">
    <property type="nucleotide sequence ID" value="NC_009648.1"/>
</dbReference>
<dbReference type="SMR" id="A6TAG8"/>
<dbReference type="STRING" id="272620.KPN_02161"/>
<dbReference type="PaxDb" id="272620-KPN_02161"/>
<dbReference type="EnsemblBacteria" id="ABR77589">
    <property type="protein sequence ID" value="ABR77589"/>
    <property type="gene ID" value="KPN_02161"/>
</dbReference>
<dbReference type="KEGG" id="kpn:KPN_02161"/>
<dbReference type="HOGENOM" id="CLU_046206_1_0_6"/>
<dbReference type="Proteomes" id="UP000000265">
    <property type="component" value="Chromosome"/>
</dbReference>
<dbReference type="GO" id="GO:0043531">
    <property type="term" value="F:ADP binding"/>
    <property type="evidence" value="ECO:0007669"/>
    <property type="project" value="UniProtKB-UniRule"/>
</dbReference>
<dbReference type="GO" id="GO:0005524">
    <property type="term" value="F:ATP binding"/>
    <property type="evidence" value="ECO:0007669"/>
    <property type="project" value="InterPro"/>
</dbReference>
<dbReference type="GO" id="GO:0016776">
    <property type="term" value="F:phosphotransferase activity, phosphate group as acceptor"/>
    <property type="evidence" value="ECO:0007669"/>
    <property type="project" value="UniProtKB-UniRule"/>
</dbReference>
<dbReference type="GO" id="GO:0004674">
    <property type="term" value="F:protein serine/threonine kinase activity"/>
    <property type="evidence" value="ECO:0007669"/>
    <property type="project" value="UniProtKB-UniRule"/>
</dbReference>
<dbReference type="HAMAP" id="MF_01062">
    <property type="entry name" value="PSRP"/>
    <property type="match status" value="1"/>
</dbReference>
<dbReference type="InterPro" id="IPR005177">
    <property type="entry name" value="Kinase-pyrophosphorylase"/>
</dbReference>
<dbReference type="InterPro" id="IPR026530">
    <property type="entry name" value="PSRP"/>
</dbReference>
<dbReference type="NCBIfam" id="NF003742">
    <property type="entry name" value="PRK05339.1"/>
    <property type="match status" value="1"/>
</dbReference>
<dbReference type="PANTHER" id="PTHR31756">
    <property type="entry name" value="PYRUVATE, PHOSPHATE DIKINASE REGULATORY PROTEIN 1, CHLOROPLASTIC"/>
    <property type="match status" value="1"/>
</dbReference>
<dbReference type="PANTHER" id="PTHR31756:SF3">
    <property type="entry name" value="PYRUVATE, PHOSPHATE DIKINASE REGULATORY PROTEIN 1, CHLOROPLASTIC"/>
    <property type="match status" value="1"/>
</dbReference>
<dbReference type="Pfam" id="PF03618">
    <property type="entry name" value="Kinase-PPPase"/>
    <property type="match status" value="1"/>
</dbReference>
<proteinExistence type="inferred from homology"/>
<feature type="chain" id="PRO_0000316684" description="Putative phosphoenolpyruvate synthase regulatory protein">
    <location>
        <begin position="1"/>
        <end position="277"/>
    </location>
</feature>
<feature type="binding site" evidence="1">
    <location>
        <begin position="157"/>
        <end position="164"/>
    </location>
    <ligand>
        <name>ADP</name>
        <dbReference type="ChEBI" id="CHEBI:456216"/>
    </ligand>
</feature>
<evidence type="ECO:0000255" key="1">
    <source>
        <dbReference type="HAMAP-Rule" id="MF_01062"/>
    </source>
</evidence>
<evidence type="ECO:0000305" key="2"/>
<name>PSRP_KLEP7</name>
<comment type="function">
    <text evidence="1">Bifunctional serine/threonine kinase and phosphorylase involved in the regulation of the phosphoenolpyruvate synthase (PEPS) by catalyzing its phosphorylation/dephosphorylation.</text>
</comment>
<comment type="catalytic activity">
    <reaction evidence="1">
        <text>[pyruvate, water dikinase] + ADP = [pyruvate, water dikinase]-phosphate + AMP + H(+)</text>
        <dbReference type="Rhea" id="RHEA:46020"/>
        <dbReference type="Rhea" id="RHEA-COMP:11425"/>
        <dbReference type="Rhea" id="RHEA-COMP:11426"/>
        <dbReference type="ChEBI" id="CHEBI:15378"/>
        <dbReference type="ChEBI" id="CHEBI:43176"/>
        <dbReference type="ChEBI" id="CHEBI:68546"/>
        <dbReference type="ChEBI" id="CHEBI:456215"/>
        <dbReference type="ChEBI" id="CHEBI:456216"/>
        <dbReference type="EC" id="2.7.11.33"/>
    </reaction>
</comment>
<comment type="catalytic activity">
    <reaction evidence="1">
        <text>[pyruvate, water dikinase]-phosphate + phosphate + H(+) = [pyruvate, water dikinase] + diphosphate</text>
        <dbReference type="Rhea" id="RHEA:48580"/>
        <dbReference type="Rhea" id="RHEA-COMP:11425"/>
        <dbReference type="Rhea" id="RHEA-COMP:11426"/>
        <dbReference type="ChEBI" id="CHEBI:15378"/>
        <dbReference type="ChEBI" id="CHEBI:33019"/>
        <dbReference type="ChEBI" id="CHEBI:43176"/>
        <dbReference type="ChEBI" id="CHEBI:43474"/>
        <dbReference type="ChEBI" id="CHEBI:68546"/>
        <dbReference type="EC" id="2.7.4.28"/>
    </reaction>
</comment>
<comment type="similarity">
    <text evidence="1">Belongs to the pyruvate, phosphate/water dikinase regulatory protein family. PSRP subfamily.</text>
</comment>
<comment type="sequence caution" evidence="2">
    <conflict type="erroneous initiation">
        <sequence resource="EMBL-CDS" id="ABR77589"/>
    </conflict>
</comment>
<keyword id="KW-0418">Kinase</keyword>
<keyword id="KW-0547">Nucleotide-binding</keyword>
<keyword id="KW-0723">Serine/threonine-protein kinase</keyword>
<keyword id="KW-0808">Transferase</keyword>
<gene>
    <name type="ordered locus">KPN78578_21280</name>
    <name type="ORF">KPN_02161</name>
</gene>
<sequence>MESAVDRHVFYISDGTAITAEVLGHAVMSQFPVAISSVTLPFVENISRARAVKEQIDAICQQTGIRPLVFYSIVIPEIRDIILQSEGFCQDIVQALVAPLQQELNLDPTPVAHRTHGLNPGNLIKYDARIAAIDYTLAHDDGISLRNLDQAQVILLGVSRCGKTPTSLYLAMQYGIRAANYPFIADDMDNLVLPASLKPLQHKMFGLTINPERLAAIREERRENSRYASLRQCRMEVTEVEALYRKNKIPCLNSTNYSVEEIATKIMDIMGLNRRMY</sequence>
<protein>
    <recommendedName>
        <fullName evidence="1">Putative phosphoenolpyruvate synthase regulatory protein</fullName>
        <shortName evidence="1">PEP synthase regulatory protein</shortName>
        <shortName evidence="1">PSRP</shortName>
        <ecNumber evidence="1">2.7.11.33</ecNumber>
        <ecNumber evidence="1">2.7.4.28</ecNumber>
    </recommendedName>
    <alternativeName>
        <fullName evidence="1">Pyruvate, water dikinase regulatory protein</fullName>
    </alternativeName>
</protein>
<accession>A6TAG8</accession>